<dbReference type="EC" id="3.1.1.96" evidence="1"/>
<dbReference type="EMBL" id="CP001052">
    <property type="protein sequence ID" value="ACD17740.1"/>
    <property type="molecule type" value="Genomic_DNA"/>
</dbReference>
<dbReference type="RefSeq" id="WP_012434307.1">
    <property type="nucleotide sequence ID" value="NC_010681.1"/>
</dbReference>
<dbReference type="SMR" id="B2SYK5"/>
<dbReference type="STRING" id="398527.Bphyt_3349"/>
<dbReference type="KEGG" id="bpy:Bphyt_3349"/>
<dbReference type="eggNOG" id="COG1490">
    <property type="taxonomic scope" value="Bacteria"/>
</dbReference>
<dbReference type="HOGENOM" id="CLU_076901_1_1_4"/>
<dbReference type="OrthoDB" id="9801395at2"/>
<dbReference type="Proteomes" id="UP000001739">
    <property type="component" value="Chromosome 1"/>
</dbReference>
<dbReference type="GO" id="GO:0005737">
    <property type="term" value="C:cytoplasm"/>
    <property type="evidence" value="ECO:0007669"/>
    <property type="project" value="UniProtKB-SubCell"/>
</dbReference>
<dbReference type="GO" id="GO:0051500">
    <property type="term" value="F:D-tyrosyl-tRNA(Tyr) deacylase activity"/>
    <property type="evidence" value="ECO:0007669"/>
    <property type="project" value="TreeGrafter"/>
</dbReference>
<dbReference type="GO" id="GO:0106026">
    <property type="term" value="F:Gly-tRNA(Ala) deacylase activity"/>
    <property type="evidence" value="ECO:0007669"/>
    <property type="project" value="UniProtKB-UniRule"/>
</dbReference>
<dbReference type="GO" id="GO:0043908">
    <property type="term" value="F:Ser(Gly)-tRNA(Ala) hydrolase activity"/>
    <property type="evidence" value="ECO:0007669"/>
    <property type="project" value="UniProtKB-UniRule"/>
</dbReference>
<dbReference type="GO" id="GO:0000049">
    <property type="term" value="F:tRNA binding"/>
    <property type="evidence" value="ECO:0007669"/>
    <property type="project" value="UniProtKB-UniRule"/>
</dbReference>
<dbReference type="GO" id="GO:0019478">
    <property type="term" value="P:D-amino acid catabolic process"/>
    <property type="evidence" value="ECO:0007669"/>
    <property type="project" value="UniProtKB-UniRule"/>
</dbReference>
<dbReference type="CDD" id="cd00563">
    <property type="entry name" value="Dtyr_deacylase"/>
    <property type="match status" value="1"/>
</dbReference>
<dbReference type="FunFam" id="3.50.80.10:FF:000001">
    <property type="entry name" value="D-aminoacyl-tRNA deacylase"/>
    <property type="match status" value="1"/>
</dbReference>
<dbReference type="Gene3D" id="3.50.80.10">
    <property type="entry name" value="D-tyrosyl-tRNA(Tyr) deacylase"/>
    <property type="match status" value="1"/>
</dbReference>
<dbReference type="HAMAP" id="MF_00518">
    <property type="entry name" value="Deacylase_Dtd"/>
    <property type="match status" value="1"/>
</dbReference>
<dbReference type="InterPro" id="IPR003732">
    <property type="entry name" value="Daa-tRNA_deacyls_DTD"/>
</dbReference>
<dbReference type="InterPro" id="IPR023509">
    <property type="entry name" value="DTD-like_sf"/>
</dbReference>
<dbReference type="NCBIfam" id="TIGR00256">
    <property type="entry name" value="D-aminoacyl-tRNA deacylase"/>
    <property type="match status" value="1"/>
</dbReference>
<dbReference type="PANTHER" id="PTHR10472:SF5">
    <property type="entry name" value="D-AMINOACYL-TRNA DEACYLASE 1"/>
    <property type="match status" value="1"/>
</dbReference>
<dbReference type="PANTHER" id="PTHR10472">
    <property type="entry name" value="D-TYROSYL-TRNA TYR DEACYLASE"/>
    <property type="match status" value="1"/>
</dbReference>
<dbReference type="Pfam" id="PF02580">
    <property type="entry name" value="Tyr_Deacylase"/>
    <property type="match status" value="1"/>
</dbReference>
<dbReference type="SUPFAM" id="SSF69500">
    <property type="entry name" value="DTD-like"/>
    <property type="match status" value="1"/>
</dbReference>
<sequence length="152" mass="16087">MIALIQRVRRAEVRVADRVTGAIEAGLLALVCAERGDSEAAADRLLAKVLGYRVFSDAAGKMNLSVQNLDGAGRAGGLLLVSQFTLAADTNSGLRPSFTPAAPPDEGKRLFDYFVAAARAKHPIVETGEFGADMQVSLVNDGPVTFWLQTNA</sequence>
<name>DTD_PARPJ</name>
<proteinExistence type="inferred from homology"/>
<protein>
    <recommendedName>
        <fullName evidence="1">D-aminoacyl-tRNA deacylase</fullName>
        <shortName evidence="1">DTD</shortName>
        <ecNumber evidence="1">3.1.1.96</ecNumber>
    </recommendedName>
    <alternativeName>
        <fullName evidence="1">Gly-tRNA(Ala) deacylase</fullName>
    </alternativeName>
</protein>
<keyword id="KW-0963">Cytoplasm</keyword>
<keyword id="KW-0378">Hydrolase</keyword>
<keyword id="KW-0694">RNA-binding</keyword>
<keyword id="KW-0820">tRNA-binding</keyword>
<feature type="chain" id="PRO_1000127502" description="D-aminoacyl-tRNA deacylase">
    <location>
        <begin position="1"/>
        <end position="152"/>
    </location>
</feature>
<feature type="short sequence motif" description="Gly-cisPro motif, important for rejection of L-amino acids" evidence="1">
    <location>
        <begin position="142"/>
        <end position="143"/>
    </location>
</feature>
<organism>
    <name type="scientific">Paraburkholderia phytofirmans (strain DSM 17436 / LMG 22146 / PsJN)</name>
    <name type="common">Burkholderia phytofirmans</name>
    <dbReference type="NCBI Taxonomy" id="398527"/>
    <lineage>
        <taxon>Bacteria</taxon>
        <taxon>Pseudomonadati</taxon>
        <taxon>Pseudomonadota</taxon>
        <taxon>Betaproteobacteria</taxon>
        <taxon>Burkholderiales</taxon>
        <taxon>Burkholderiaceae</taxon>
        <taxon>Paraburkholderia</taxon>
    </lineage>
</organism>
<gene>
    <name evidence="1" type="primary">dtd</name>
    <name type="ordered locus">Bphyt_3349</name>
</gene>
<evidence type="ECO:0000255" key="1">
    <source>
        <dbReference type="HAMAP-Rule" id="MF_00518"/>
    </source>
</evidence>
<reference key="1">
    <citation type="journal article" date="2011" name="J. Bacteriol.">
        <title>Complete genome sequence of the plant growth-promoting endophyte Burkholderia phytofirmans strain PsJN.</title>
        <authorList>
            <person name="Weilharter A."/>
            <person name="Mitter B."/>
            <person name="Shin M.V."/>
            <person name="Chain P.S."/>
            <person name="Nowak J."/>
            <person name="Sessitsch A."/>
        </authorList>
    </citation>
    <scope>NUCLEOTIDE SEQUENCE [LARGE SCALE GENOMIC DNA]</scope>
    <source>
        <strain>DSM 17436 / LMG 22146 / PsJN</strain>
    </source>
</reference>
<accession>B2SYK5</accession>
<comment type="function">
    <text evidence="1">An aminoacyl-tRNA editing enzyme that deacylates mischarged D-aminoacyl-tRNAs. Also deacylates mischarged glycyl-tRNA(Ala), protecting cells against glycine mischarging by AlaRS. Acts via tRNA-based rather than protein-based catalysis; rejects L-amino acids rather than detecting D-amino acids in the active site. By recycling D-aminoacyl-tRNA to D-amino acids and free tRNA molecules, this enzyme counteracts the toxicity associated with the formation of D-aminoacyl-tRNA entities in vivo and helps enforce protein L-homochirality.</text>
</comment>
<comment type="catalytic activity">
    <reaction evidence="1">
        <text>glycyl-tRNA(Ala) + H2O = tRNA(Ala) + glycine + H(+)</text>
        <dbReference type="Rhea" id="RHEA:53744"/>
        <dbReference type="Rhea" id="RHEA-COMP:9657"/>
        <dbReference type="Rhea" id="RHEA-COMP:13640"/>
        <dbReference type="ChEBI" id="CHEBI:15377"/>
        <dbReference type="ChEBI" id="CHEBI:15378"/>
        <dbReference type="ChEBI" id="CHEBI:57305"/>
        <dbReference type="ChEBI" id="CHEBI:78442"/>
        <dbReference type="ChEBI" id="CHEBI:78522"/>
        <dbReference type="EC" id="3.1.1.96"/>
    </reaction>
</comment>
<comment type="catalytic activity">
    <reaction evidence="1">
        <text>a D-aminoacyl-tRNA + H2O = a tRNA + a D-alpha-amino acid + H(+)</text>
        <dbReference type="Rhea" id="RHEA:13953"/>
        <dbReference type="Rhea" id="RHEA-COMP:10123"/>
        <dbReference type="Rhea" id="RHEA-COMP:10124"/>
        <dbReference type="ChEBI" id="CHEBI:15377"/>
        <dbReference type="ChEBI" id="CHEBI:15378"/>
        <dbReference type="ChEBI" id="CHEBI:59871"/>
        <dbReference type="ChEBI" id="CHEBI:78442"/>
        <dbReference type="ChEBI" id="CHEBI:79333"/>
        <dbReference type="EC" id="3.1.1.96"/>
    </reaction>
</comment>
<comment type="subunit">
    <text evidence="1">Homodimer.</text>
</comment>
<comment type="subcellular location">
    <subcellularLocation>
        <location evidence="1">Cytoplasm</location>
    </subcellularLocation>
</comment>
<comment type="domain">
    <text evidence="1">A Gly-cisPro motif from one monomer fits into the active site of the other monomer to allow specific chiral rejection of L-amino acids.</text>
</comment>
<comment type="similarity">
    <text evidence="1">Belongs to the DTD family.</text>
</comment>